<name>RL20_EHRCJ</name>
<accession>Q3YSX0</accession>
<organism>
    <name type="scientific">Ehrlichia canis (strain Jake)</name>
    <dbReference type="NCBI Taxonomy" id="269484"/>
    <lineage>
        <taxon>Bacteria</taxon>
        <taxon>Pseudomonadati</taxon>
        <taxon>Pseudomonadota</taxon>
        <taxon>Alphaproteobacteria</taxon>
        <taxon>Rickettsiales</taxon>
        <taxon>Anaplasmataceae</taxon>
        <taxon>Ehrlichia</taxon>
    </lineage>
</organism>
<reference key="1">
    <citation type="journal article" date="2006" name="J. Bacteriol.">
        <title>The genome of the obligately intracellular bacterium Ehrlichia canis reveals themes of complex membrane structure and immune evasion strategies.</title>
        <authorList>
            <person name="Mavromatis K."/>
            <person name="Doyle C.K."/>
            <person name="Lykidis A."/>
            <person name="Ivanova N."/>
            <person name="Francino M.P."/>
            <person name="Chain P."/>
            <person name="Shin M."/>
            <person name="Malfatti S."/>
            <person name="Larimer F."/>
            <person name="Copeland A."/>
            <person name="Detter J.C."/>
            <person name="Land M."/>
            <person name="Richardson P.M."/>
            <person name="Yu X.J."/>
            <person name="Walker D.H."/>
            <person name="McBride J.W."/>
            <person name="Kyrpides N.C."/>
        </authorList>
    </citation>
    <scope>NUCLEOTIDE SEQUENCE [LARGE SCALE GENOMIC DNA]</scope>
    <source>
        <strain>Jake</strain>
    </source>
</reference>
<dbReference type="EMBL" id="CP000107">
    <property type="protein sequence ID" value="AAZ68185.1"/>
    <property type="molecule type" value="Genomic_DNA"/>
</dbReference>
<dbReference type="RefSeq" id="WP_011304263.1">
    <property type="nucleotide sequence ID" value="NC_007354.1"/>
</dbReference>
<dbReference type="SMR" id="Q3YSX0"/>
<dbReference type="FunCoup" id="Q3YSX0">
    <property type="interactions" value="351"/>
</dbReference>
<dbReference type="STRING" id="269484.Ecaj_0134"/>
<dbReference type="KEGG" id="ecn:Ecaj_0134"/>
<dbReference type="eggNOG" id="COG0292">
    <property type="taxonomic scope" value="Bacteria"/>
</dbReference>
<dbReference type="HOGENOM" id="CLU_123265_0_1_5"/>
<dbReference type="InParanoid" id="Q3YSX0"/>
<dbReference type="Proteomes" id="UP000000435">
    <property type="component" value="Chromosome"/>
</dbReference>
<dbReference type="GO" id="GO:1990904">
    <property type="term" value="C:ribonucleoprotein complex"/>
    <property type="evidence" value="ECO:0007669"/>
    <property type="project" value="UniProtKB-KW"/>
</dbReference>
<dbReference type="GO" id="GO:0005840">
    <property type="term" value="C:ribosome"/>
    <property type="evidence" value="ECO:0007669"/>
    <property type="project" value="UniProtKB-KW"/>
</dbReference>
<dbReference type="GO" id="GO:0019843">
    <property type="term" value="F:rRNA binding"/>
    <property type="evidence" value="ECO:0007669"/>
    <property type="project" value="UniProtKB-UniRule"/>
</dbReference>
<dbReference type="GO" id="GO:0003735">
    <property type="term" value="F:structural constituent of ribosome"/>
    <property type="evidence" value="ECO:0007669"/>
    <property type="project" value="InterPro"/>
</dbReference>
<dbReference type="GO" id="GO:0000027">
    <property type="term" value="P:ribosomal large subunit assembly"/>
    <property type="evidence" value="ECO:0007669"/>
    <property type="project" value="UniProtKB-UniRule"/>
</dbReference>
<dbReference type="GO" id="GO:0006412">
    <property type="term" value="P:translation"/>
    <property type="evidence" value="ECO:0007669"/>
    <property type="project" value="InterPro"/>
</dbReference>
<dbReference type="CDD" id="cd07026">
    <property type="entry name" value="Ribosomal_L20"/>
    <property type="match status" value="1"/>
</dbReference>
<dbReference type="FunFam" id="1.10.1900.20:FF:000001">
    <property type="entry name" value="50S ribosomal protein L20"/>
    <property type="match status" value="1"/>
</dbReference>
<dbReference type="Gene3D" id="6.10.160.10">
    <property type="match status" value="1"/>
</dbReference>
<dbReference type="Gene3D" id="1.10.1900.20">
    <property type="entry name" value="Ribosomal protein L20"/>
    <property type="match status" value="1"/>
</dbReference>
<dbReference type="HAMAP" id="MF_00382">
    <property type="entry name" value="Ribosomal_bL20"/>
    <property type="match status" value="1"/>
</dbReference>
<dbReference type="InterPro" id="IPR005813">
    <property type="entry name" value="Ribosomal_bL20"/>
</dbReference>
<dbReference type="InterPro" id="IPR049946">
    <property type="entry name" value="RIBOSOMAL_L20_CS"/>
</dbReference>
<dbReference type="InterPro" id="IPR035566">
    <property type="entry name" value="Ribosomal_protein_bL20_C"/>
</dbReference>
<dbReference type="NCBIfam" id="TIGR01032">
    <property type="entry name" value="rplT_bact"/>
    <property type="match status" value="1"/>
</dbReference>
<dbReference type="PANTHER" id="PTHR10986">
    <property type="entry name" value="39S RIBOSOMAL PROTEIN L20"/>
    <property type="match status" value="1"/>
</dbReference>
<dbReference type="Pfam" id="PF00453">
    <property type="entry name" value="Ribosomal_L20"/>
    <property type="match status" value="1"/>
</dbReference>
<dbReference type="PRINTS" id="PR00062">
    <property type="entry name" value="RIBOSOMALL20"/>
</dbReference>
<dbReference type="SUPFAM" id="SSF74731">
    <property type="entry name" value="Ribosomal protein L20"/>
    <property type="match status" value="1"/>
</dbReference>
<dbReference type="PROSITE" id="PS00937">
    <property type="entry name" value="RIBOSOMAL_L20"/>
    <property type="match status" value="1"/>
</dbReference>
<evidence type="ECO:0000255" key="1">
    <source>
        <dbReference type="HAMAP-Rule" id="MF_00382"/>
    </source>
</evidence>
<evidence type="ECO:0000305" key="2"/>
<keyword id="KW-0687">Ribonucleoprotein</keyword>
<keyword id="KW-0689">Ribosomal protein</keyword>
<keyword id="KW-0694">RNA-binding</keyword>
<keyword id="KW-0699">rRNA-binding</keyword>
<protein>
    <recommendedName>
        <fullName evidence="1">Large ribosomal subunit protein bL20</fullName>
    </recommendedName>
    <alternativeName>
        <fullName evidence="2">50S ribosomal protein L20</fullName>
    </alternativeName>
</protein>
<proteinExistence type="inferred from homology"/>
<comment type="function">
    <text evidence="1">Binds directly to 23S ribosomal RNA and is necessary for the in vitro assembly process of the 50S ribosomal subunit. It is not involved in the protein synthesizing functions of that subunit.</text>
</comment>
<comment type="similarity">
    <text evidence="1">Belongs to the bacterial ribosomal protein bL20 family.</text>
</comment>
<feature type="chain" id="PRO_0000243678" description="Large ribosomal subunit protein bL20">
    <location>
        <begin position="1"/>
        <end position="124"/>
    </location>
</feature>
<sequence>MARVKRGVTTRARHKKVIKLAKGYRGRSKNCYRIALQRVEKALQYAYRDRRNRKRFFRSLWIMRINAAARQHGLLYSDFIHGLSLANITLNRKVLADMAVNNQDNFKQIVDITKEALTKSRVAQ</sequence>
<gene>
    <name evidence="1" type="primary">rplT</name>
    <name type="ordered locus">Ecaj_0134</name>
</gene>